<proteinExistence type="inferred from homology"/>
<sequence>MTDLFSSPDHTLDALGLRCPEPVMMVRKTVRNMQPGETLLIIADDPATTRDIPGFCTFMEHELVAKETDGLPYRYLIRKGH</sequence>
<keyword id="KW-0963">Cytoplasm</keyword>
<keyword id="KW-0819">tRNA processing</keyword>
<feature type="chain" id="PRO_1000199922" description="Sulfur carrier protein TusA">
    <location>
        <begin position="1"/>
        <end position="81"/>
    </location>
</feature>
<feature type="active site" description="Cysteine persulfide intermediate" evidence="1">
    <location>
        <position position="19"/>
    </location>
</feature>
<evidence type="ECO:0000255" key="1">
    <source>
        <dbReference type="HAMAP-Rule" id="MF_00413"/>
    </source>
</evidence>
<accession>B7LST2</accession>
<gene>
    <name evidence="1" type="primary">tusA</name>
    <name type="ordered locus">EFER_3444</name>
</gene>
<organism>
    <name type="scientific">Escherichia fergusonii (strain ATCC 35469 / DSM 13698 / CCUG 18766 / IAM 14443 / JCM 21226 / LMG 7866 / NBRC 102419 / NCTC 12128 / CDC 0568-73)</name>
    <dbReference type="NCBI Taxonomy" id="585054"/>
    <lineage>
        <taxon>Bacteria</taxon>
        <taxon>Pseudomonadati</taxon>
        <taxon>Pseudomonadota</taxon>
        <taxon>Gammaproteobacteria</taxon>
        <taxon>Enterobacterales</taxon>
        <taxon>Enterobacteriaceae</taxon>
        <taxon>Escherichia</taxon>
    </lineage>
</organism>
<reference key="1">
    <citation type="journal article" date="2009" name="PLoS Genet.">
        <title>Organised genome dynamics in the Escherichia coli species results in highly diverse adaptive paths.</title>
        <authorList>
            <person name="Touchon M."/>
            <person name="Hoede C."/>
            <person name="Tenaillon O."/>
            <person name="Barbe V."/>
            <person name="Baeriswyl S."/>
            <person name="Bidet P."/>
            <person name="Bingen E."/>
            <person name="Bonacorsi S."/>
            <person name="Bouchier C."/>
            <person name="Bouvet O."/>
            <person name="Calteau A."/>
            <person name="Chiapello H."/>
            <person name="Clermont O."/>
            <person name="Cruveiller S."/>
            <person name="Danchin A."/>
            <person name="Diard M."/>
            <person name="Dossat C."/>
            <person name="Karoui M.E."/>
            <person name="Frapy E."/>
            <person name="Garry L."/>
            <person name="Ghigo J.M."/>
            <person name="Gilles A.M."/>
            <person name="Johnson J."/>
            <person name="Le Bouguenec C."/>
            <person name="Lescat M."/>
            <person name="Mangenot S."/>
            <person name="Martinez-Jehanne V."/>
            <person name="Matic I."/>
            <person name="Nassif X."/>
            <person name="Oztas S."/>
            <person name="Petit M.A."/>
            <person name="Pichon C."/>
            <person name="Rouy Z."/>
            <person name="Ruf C.S."/>
            <person name="Schneider D."/>
            <person name="Tourret J."/>
            <person name="Vacherie B."/>
            <person name="Vallenet D."/>
            <person name="Medigue C."/>
            <person name="Rocha E.P.C."/>
            <person name="Denamur E."/>
        </authorList>
    </citation>
    <scope>NUCLEOTIDE SEQUENCE [LARGE SCALE GENOMIC DNA]</scope>
    <source>
        <strain>ATCC 35469 / DSM 13698 / BCRC 15582 / CCUG 18766 / IAM 14443 / JCM 21226 / LMG 7866 / NBRC 102419 / NCTC 12128 / CDC 0568-73</strain>
    </source>
</reference>
<dbReference type="EMBL" id="CU928158">
    <property type="protein sequence ID" value="CAQ90921.1"/>
    <property type="molecule type" value="Genomic_DNA"/>
</dbReference>
<dbReference type="RefSeq" id="WP_000130622.1">
    <property type="nucleotide sequence ID" value="NC_011740.1"/>
</dbReference>
<dbReference type="SMR" id="B7LST2"/>
<dbReference type="GeneID" id="75059948"/>
<dbReference type="KEGG" id="efe:EFER_3444"/>
<dbReference type="HOGENOM" id="CLU_165255_5_0_6"/>
<dbReference type="OrthoDB" id="9797352at2"/>
<dbReference type="Proteomes" id="UP000000745">
    <property type="component" value="Chromosome"/>
</dbReference>
<dbReference type="GO" id="GO:0005737">
    <property type="term" value="C:cytoplasm"/>
    <property type="evidence" value="ECO:0007669"/>
    <property type="project" value="UniProtKB-SubCell"/>
</dbReference>
<dbReference type="GO" id="GO:0097163">
    <property type="term" value="F:sulfur carrier activity"/>
    <property type="evidence" value="ECO:0007669"/>
    <property type="project" value="UniProtKB-UniRule"/>
</dbReference>
<dbReference type="GO" id="GO:0002143">
    <property type="term" value="P:tRNA wobble position uridine thiolation"/>
    <property type="evidence" value="ECO:0007669"/>
    <property type="project" value="InterPro"/>
</dbReference>
<dbReference type="CDD" id="cd03423">
    <property type="entry name" value="SirA"/>
    <property type="match status" value="1"/>
</dbReference>
<dbReference type="FunFam" id="3.30.110.40:FF:000002">
    <property type="entry name" value="Sulfur carrier protein TusA"/>
    <property type="match status" value="1"/>
</dbReference>
<dbReference type="Gene3D" id="3.30.110.40">
    <property type="entry name" value="TusA-like domain"/>
    <property type="match status" value="1"/>
</dbReference>
<dbReference type="HAMAP" id="MF_00413">
    <property type="entry name" value="Thiourid_synth_A"/>
    <property type="match status" value="1"/>
</dbReference>
<dbReference type="InterPro" id="IPR022931">
    <property type="entry name" value="Sulphur_carrier_TusA"/>
</dbReference>
<dbReference type="InterPro" id="IPR001455">
    <property type="entry name" value="TusA-like"/>
</dbReference>
<dbReference type="InterPro" id="IPR036868">
    <property type="entry name" value="TusA-like_sf"/>
</dbReference>
<dbReference type="NCBIfam" id="NF001423">
    <property type="entry name" value="PRK00299.1"/>
    <property type="match status" value="1"/>
</dbReference>
<dbReference type="PANTHER" id="PTHR33279:SF2">
    <property type="entry name" value="SULFUR CARRIER PROTEIN TUSA"/>
    <property type="match status" value="1"/>
</dbReference>
<dbReference type="PANTHER" id="PTHR33279">
    <property type="entry name" value="SULFUR CARRIER PROTEIN YEDF-RELATED"/>
    <property type="match status" value="1"/>
</dbReference>
<dbReference type="Pfam" id="PF01206">
    <property type="entry name" value="TusA"/>
    <property type="match status" value="1"/>
</dbReference>
<dbReference type="SUPFAM" id="SSF64307">
    <property type="entry name" value="SirA-like"/>
    <property type="match status" value="1"/>
</dbReference>
<dbReference type="PROSITE" id="PS01148">
    <property type="entry name" value="UPF0033"/>
    <property type="match status" value="1"/>
</dbReference>
<name>TUSA_ESCF3</name>
<comment type="function">
    <text evidence="1">Sulfur carrier protein involved in sulfur trafficking in the cell. Part of a sulfur-relay system required for 2-thiolation during synthesis of 2-thiouridine of the modified wobble base 5-methylaminomethyl-2-thiouridine (mnm(5)s(2)U) in tRNA. Interacts with IscS and stimulates its cysteine desulfurase activity. Accepts an activated sulfur from IscS, which is then transferred to TusD, and thus determines the direction of sulfur flow from IscS to 2-thiouridine formation. Also appears to be involved in sulfur transfer for the biosynthesis of molybdopterin.</text>
</comment>
<comment type="pathway">
    <text evidence="1">tRNA modification.</text>
</comment>
<comment type="subunit">
    <text evidence="1">Interacts with IscS.</text>
</comment>
<comment type="subcellular location">
    <subcellularLocation>
        <location evidence="1">Cytoplasm</location>
    </subcellularLocation>
</comment>
<comment type="similarity">
    <text evidence="1">Belongs to the sulfur carrier protein TusA family.</text>
</comment>
<protein>
    <recommendedName>
        <fullName evidence="1">Sulfur carrier protein TusA</fullName>
    </recommendedName>
    <alternativeName>
        <fullName evidence="1">Sulfur mediator TusA</fullName>
    </alternativeName>
    <alternativeName>
        <fullName evidence="1">Sulfur transfer protein TusA</fullName>
    </alternativeName>
    <alternativeName>
        <fullName evidence="1">tRNA 2-thiouridine synthesizing protein A</fullName>
    </alternativeName>
</protein>